<comment type="function">
    <text evidence="1">Required for the formation of a threonylcarbamoyl group on adenosine at position 37 (t(6)A37) in tRNAs that read codons beginning with adenine. Is a component of the KEOPS complex that is probably involved in the transfer of the threonylcarbamoyl moiety of threonylcarbamoyl-AMP (TC-AMP) to the N6 group of A37. Kae1 likely plays a direct catalytic role in this reaction, but requires other protein(s) of the complex to fulfill this activity.</text>
</comment>
<comment type="catalytic activity">
    <reaction evidence="1">
        <text>L-threonylcarbamoyladenylate + adenosine(37) in tRNA = N(6)-L-threonylcarbamoyladenosine(37) in tRNA + AMP + H(+)</text>
        <dbReference type="Rhea" id="RHEA:37059"/>
        <dbReference type="Rhea" id="RHEA-COMP:10162"/>
        <dbReference type="Rhea" id="RHEA-COMP:10163"/>
        <dbReference type="ChEBI" id="CHEBI:15378"/>
        <dbReference type="ChEBI" id="CHEBI:73682"/>
        <dbReference type="ChEBI" id="CHEBI:74411"/>
        <dbReference type="ChEBI" id="CHEBI:74418"/>
        <dbReference type="ChEBI" id="CHEBI:456215"/>
        <dbReference type="EC" id="2.3.1.234"/>
    </reaction>
</comment>
<comment type="cofactor">
    <cofactor evidence="1">
        <name>Fe(2+)</name>
        <dbReference type="ChEBI" id="CHEBI:29033"/>
    </cofactor>
    <text evidence="1">Binds 1 Fe(2+) ion per subunit.</text>
</comment>
<comment type="subunit">
    <text evidence="1">Monomer. Component of the KEOPS complex that consists of Kae1, Bud32, Cgi121 and Pcc1; the whole complex dimerizes.</text>
</comment>
<comment type="subcellular location">
    <subcellularLocation>
        <location evidence="1">Cytoplasm</location>
    </subcellularLocation>
</comment>
<comment type="similarity">
    <text evidence="1">Belongs to the KAE1 / TsaD family.</text>
</comment>
<evidence type="ECO:0000255" key="1">
    <source>
        <dbReference type="HAMAP-Rule" id="MF_01446"/>
    </source>
</evidence>
<keyword id="KW-0012">Acyltransferase</keyword>
<keyword id="KW-0963">Cytoplasm</keyword>
<keyword id="KW-0408">Iron</keyword>
<keyword id="KW-0479">Metal-binding</keyword>
<keyword id="KW-1185">Reference proteome</keyword>
<keyword id="KW-0808">Transferase</keyword>
<keyword id="KW-0819">tRNA processing</keyword>
<sequence length="324" mass="35305">MYVLGIEGTAWNLSAAIVNEDDVIIERAATYTPARGGIHPREAAQHHSEHIGPLLREVIQGARDLGIKIDGVAFSQGPGLGPCLRTVATAARVLALKLNVPLVGVNHCIAHIEIGKWKTGARDPAVLYVSGGNSQVLALRRGRYRIFGETLDISVGNMLDKFARSVGLPHPGGPRIEELARNAKEYIPLPYTVKGMDFSFSGLATAAAEAARRYDLEDVCYSLQETAFAMLVEVTERAMAHAEKKEAMLVGGVGANRRLGEMLRLMCEERGARFYLPERRFMGDNGSMIAYTGLVMLKSGVSTPIESSGVRPNYRTDEVEVRWA</sequence>
<proteinExistence type="inferred from homology"/>
<organism>
    <name type="scientific">Methanothrix thermoacetophila (strain DSM 6194 / JCM 14653 / NBRC 101360 / PT)</name>
    <name type="common">Methanosaeta thermophila</name>
    <dbReference type="NCBI Taxonomy" id="349307"/>
    <lineage>
        <taxon>Archaea</taxon>
        <taxon>Methanobacteriati</taxon>
        <taxon>Methanobacteriota</taxon>
        <taxon>Stenosarchaea group</taxon>
        <taxon>Methanomicrobia</taxon>
        <taxon>Methanotrichales</taxon>
        <taxon>Methanotrichaceae</taxon>
        <taxon>Methanothrix</taxon>
    </lineage>
</organism>
<accession>A0B5S0</accession>
<gene>
    <name evidence="1" type="primary">kae1</name>
    <name type="ordered locus">Mthe_0247</name>
</gene>
<reference key="1">
    <citation type="submission" date="2006-10" db="EMBL/GenBank/DDBJ databases">
        <title>Complete sequence of Methanosaeta thermophila PT.</title>
        <authorList>
            <consortium name="US DOE Joint Genome Institute"/>
            <person name="Copeland A."/>
            <person name="Lucas S."/>
            <person name="Lapidus A."/>
            <person name="Barry K."/>
            <person name="Detter J.C."/>
            <person name="Glavina del Rio T."/>
            <person name="Hammon N."/>
            <person name="Israni S."/>
            <person name="Pitluck S."/>
            <person name="Chain P."/>
            <person name="Malfatti S."/>
            <person name="Shin M."/>
            <person name="Vergez L."/>
            <person name="Schmutz J."/>
            <person name="Larimer F."/>
            <person name="Land M."/>
            <person name="Hauser L."/>
            <person name="Kyrpides N."/>
            <person name="Kim E."/>
            <person name="Smith K.S."/>
            <person name="Ingram-Smith C."/>
            <person name="Richardson P."/>
        </authorList>
    </citation>
    <scope>NUCLEOTIDE SEQUENCE [LARGE SCALE GENOMIC DNA]</scope>
    <source>
        <strain>DSM 6194 / JCM 14653 / NBRC 101360 / PT</strain>
    </source>
</reference>
<name>KAE1_METTP</name>
<protein>
    <recommendedName>
        <fullName evidence="1">tRNA N6-adenosine threonylcarbamoyltransferase</fullName>
        <ecNumber evidence="1">2.3.1.234</ecNumber>
    </recommendedName>
    <alternativeName>
        <fullName evidence="1">N6-L-threonylcarbamoyladenine synthase</fullName>
        <shortName evidence="1">t(6)A synthase</shortName>
    </alternativeName>
    <alternativeName>
        <fullName evidence="1">t(6)A37 threonylcarbamoyladenosine biosynthesis protein Kae1</fullName>
    </alternativeName>
    <alternativeName>
        <fullName evidence="1">tRNA threonylcarbamoyladenosine biosynthesis protein Kae1</fullName>
    </alternativeName>
</protein>
<feature type="chain" id="PRO_0000303635" description="tRNA N6-adenosine threonylcarbamoyltransferase">
    <location>
        <begin position="1"/>
        <end position="324"/>
    </location>
</feature>
<feature type="binding site" evidence="1">
    <location>
        <position position="107"/>
    </location>
    <ligand>
        <name>Fe cation</name>
        <dbReference type="ChEBI" id="CHEBI:24875"/>
    </ligand>
</feature>
<feature type="binding site" evidence="1">
    <location>
        <position position="111"/>
    </location>
    <ligand>
        <name>Fe cation</name>
        <dbReference type="ChEBI" id="CHEBI:24875"/>
    </ligand>
</feature>
<feature type="binding site" evidence="1">
    <location>
        <begin position="128"/>
        <end position="132"/>
    </location>
    <ligand>
        <name>substrate</name>
    </ligand>
</feature>
<feature type="binding site" evidence="1">
    <location>
        <position position="128"/>
    </location>
    <ligand>
        <name>Fe cation</name>
        <dbReference type="ChEBI" id="CHEBI:24875"/>
    </ligand>
</feature>
<feature type="binding site" evidence="1">
    <location>
        <position position="160"/>
    </location>
    <ligand>
        <name>substrate</name>
    </ligand>
</feature>
<feature type="binding site" evidence="1">
    <location>
        <position position="173"/>
    </location>
    <ligand>
        <name>substrate</name>
    </ligand>
</feature>
<feature type="binding site" evidence="1">
    <location>
        <position position="177"/>
    </location>
    <ligand>
        <name>substrate</name>
    </ligand>
</feature>
<feature type="binding site" evidence="1">
    <location>
        <position position="256"/>
    </location>
    <ligand>
        <name>substrate</name>
    </ligand>
</feature>
<feature type="binding site" evidence="1">
    <location>
        <position position="284"/>
    </location>
    <ligand>
        <name>Fe cation</name>
        <dbReference type="ChEBI" id="CHEBI:24875"/>
    </ligand>
</feature>
<dbReference type="EC" id="2.3.1.234" evidence="1"/>
<dbReference type="EMBL" id="CP000477">
    <property type="protein sequence ID" value="ABK14044.1"/>
    <property type="molecule type" value="Genomic_DNA"/>
</dbReference>
<dbReference type="RefSeq" id="WP_011695443.1">
    <property type="nucleotide sequence ID" value="NC_008553.1"/>
</dbReference>
<dbReference type="SMR" id="A0B5S0"/>
<dbReference type="STRING" id="349307.Mthe_0247"/>
<dbReference type="GeneID" id="4462070"/>
<dbReference type="KEGG" id="mtp:Mthe_0247"/>
<dbReference type="HOGENOM" id="CLU_023208_2_2_2"/>
<dbReference type="OrthoDB" id="6818at2157"/>
<dbReference type="Proteomes" id="UP000000674">
    <property type="component" value="Chromosome"/>
</dbReference>
<dbReference type="GO" id="GO:0005737">
    <property type="term" value="C:cytoplasm"/>
    <property type="evidence" value="ECO:0007669"/>
    <property type="project" value="UniProtKB-SubCell"/>
</dbReference>
<dbReference type="GO" id="GO:0000408">
    <property type="term" value="C:EKC/KEOPS complex"/>
    <property type="evidence" value="ECO:0007669"/>
    <property type="project" value="InterPro"/>
</dbReference>
<dbReference type="GO" id="GO:0005506">
    <property type="term" value="F:iron ion binding"/>
    <property type="evidence" value="ECO:0007669"/>
    <property type="project" value="UniProtKB-UniRule"/>
</dbReference>
<dbReference type="GO" id="GO:0061711">
    <property type="term" value="F:N(6)-L-threonylcarbamoyladenine synthase activity"/>
    <property type="evidence" value="ECO:0007669"/>
    <property type="project" value="UniProtKB-EC"/>
</dbReference>
<dbReference type="GO" id="GO:0002949">
    <property type="term" value="P:tRNA threonylcarbamoyladenosine modification"/>
    <property type="evidence" value="ECO:0007669"/>
    <property type="project" value="UniProtKB-UniRule"/>
</dbReference>
<dbReference type="CDD" id="cd24131">
    <property type="entry name" value="ASKHA_NBD_Kae1_arch_bac"/>
    <property type="match status" value="1"/>
</dbReference>
<dbReference type="FunFam" id="3.30.420.40:FF:000038">
    <property type="entry name" value="Probable tRNA N6-adenosine threonylcarbamoyltransferase"/>
    <property type="match status" value="1"/>
</dbReference>
<dbReference type="Gene3D" id="3.30.420.40">
    <property type="match status" value="2"/>
</dbReference>
<dbReference type="HAMAP" id="MF_01446">
    <property type="entry name" value="Kae1"/>
    <property type="match status" value="1"/>
</dbReference>
<dbReference type="InterPro" id="IPR043129">
    <property type="entry name" value="ATPase_NBD"/>
</dbReference>
<dbReference type="InterPro" id="IPR000905">
    <property type="entry name" value="Gcp-like_dom"/>
</dbReference>
<dbReference type="InterPro" id="IPR017861">
    <property type="entry name" value="KAE1/TsaD"/>
</dbReference>
<dbReference type="InterPro" id="IPR034680">
    <property type="entry name" value="Kae1_archaea_euk"/>
</dbReference>
<dbReference type="NCBIfam" id="TIGR03722">
    <property type="entry name" value="arch_KAE1"/>
    <property type="match status" value="1"/>
</dbReference>
<dbReference type="NCBIfam" id="TIGR00329">
    <property type="entry name" value="gcp_kae1"/>
    <property type="match status" value="1"/>
</dbReference>
<dbReference type="NCBIfam" id="NF007174">
    <property type="entry name" value="PRK09605.1"/>
    <property type="match status" value="1"/>
</dbReference>
<dbReference type="PANTHER" id="PTHR11735">
    <property type="entry name" value="TRNA N6-ADENOSINE THREONYLCARBAMOYLTRANSFERASE"/>
    <property type="match status" value="1"/>
</dbReference>
<dbReference type="PANTHER" id="PTHR11735:SF14">
    <property type="entry name" value="TRNA N6-ADENOSINE THREONYLCARBAMOYLTRANSFERASE"/>
    <property type="match status" value="1"/>
</dbReference>
<dbReference type="Pfam" id="PF00814">
    <property type="entry name" value="TsaD"/>
    <property type="match status" value="1"/>
</dbReference>
<dbReference type="PRINTS" id="PR00789">
    <property type="entry name" value="OSIALOPTASE"/>
</dbReference>
<dbReference type="SUPFAM" id="SSF53067">
    <property type="entry name" value="Actin-like ATPase domain"/>
    <property type="match status" value="1"/>
</dbReference>